<keyword id="KW-1185">Reference proteome</keyword>
<keyword id="KW-0687">Ribonucleoprotein</keyword>
<keyword id="KW-0689">Ribosomal protein</keyword>
<keyword id="KW-0694">RNA-binding</keyword>
<keyword id="KW-0699">rRNA-binding</keyword>
<proteinExistence type="inferred from homology"/>
<dbReference type="EMBL" id="AP008971">
    <property type="protein sequence ID" value="BAG07587.1"/>
    <property type="molecule type" value="Genomic_DNA"/>
</dbReference>
<dbReference type="RefSeq" id="WP_002837393.1">
    <property type="nucleotide sequence ID" value="NC_010376.1"/>
</dbReference>
<dbReference type="SMR" id="B0RZS3"/>
<dbReference type="STRING" id="334413.FMG_0169"/>
<dbReference type="KEGG" id="fma:FMG_0169"/>
<dbReference type="eggNOG" id="COG0096">
    <property type="taxonomic scope" value="Bacteria"/>
</dbReference>
<dbReference type="HOGENOM" id="CLU_098428_0_2_9"/>
<dbReference type="Proteomes" id="UP000001319">
    <property type="component" value="Chromosome"/>
</dbReference>
<dbReference type="GO" id="GO:1990904">
    <property type="term" value="C:ribonucleoprotein complex"/>
    <property type="evidence" value="ECO:0007669"/>
    <property type="project" value="UniProtKB-KW"/>
</dbReference>
<dbReference type="GO" id="GO:0005840">
    <property type="term" value="C:ribosome"/>
    <property type="evidence" value="ECO:0007669"/>
    <property type="project" value="UniProtKB-KW"/>
</dbReference>
<dbReference type="GO" id="GO:0019843">
    <property type="term" value="F:rRNA binding"/>
    <property type="evidence" value="ECO:0007669"/>
    <property type="project" value="UniProtKB-UniRule"/>
</dbReference>
<dbReference type="GO" id="GO:0003735">
    <property type="term" value="F:structural constituent of ribosome"/>
    <property type="evidence" value="ECO:0007669"/>
    <property type="project" value="InterPro"/>
</dbReference>
<dbReference type="GO" id="GO:0006412">
    <property type="term" value="P:translation"/>
    <property type="evidence" value="ECO:0007669"/>
    <property type="project" value="UniProtKB-UniRule"/>
</dbReference>
<dbReference type="FunFam" id="3.30.1370.30:FF:000002">
    <property type="entry name" value="30S ribosomal protein S8"/>
    <property type="match status" value="1"/>
</dbReference>
<dbReference type="FunFam" id="3.30.1490.10:FF:000001">
    <property type="entry name" value="30S ribosomal protein S8"/>
    <property type="match status" value="1"/>
</dbReference>
<dbReference type="Gene3D" id="3.30.1370.30">
    <property type="match status" value="1"/>
</dbReference>
<dbReference type="Gene3D" id="3.30.1490.10">
    <property type="match status" value="1"/>
</dbReference>
<dbReference type="HAMAP" id="MF_01302_B">
    <property type="entry name" value="Ribosomal_uS8_B"/>
    <property type="match status" value="1"/>
</dbReference>
<dbReference type="InterPro" id="IPR000630">
    <property type="entry name" value="Ribosomal_uS8"/>
</dbReference>
<dbReference type="InterPro" id="IPR047863">
    <property type="entry name" value="Ribosomal_uS8_CS"/>
</dbReference>
<dbReference type="InterPro" id="IPR035987">
    <property type="entry name" value="Ribosomal_uS8_sf"/>
</dbReference>
<dbReference type="NCBIfam" id="NF001109">
    <property type="entry name" value="PRK00136.1"/>
    <property type="match status" value="1"/>
</dbReference>
<dbReference type="PANTHER" id="PTHR11758">
    <property type="entry name" value="40S RIBOSOMAL PROTEIN S15A"/>
    <property type="match status" value="1"/>
</dbReference>
<dbReference type="Pfam" id="PF00410">
    <property type="entry name" value="Ribosomal_S8"/>
    <property type="match status" value="1"/>
</dbReference>
<dbReference type="SUPFAM" id="SSF56047">
    <property type="entry name" value="Ribosomal protein S8"/>
    <property type="match status" value="1"/>
</dbReference>
<dbReference type="PROSITE" id="PS00053">
    <property type="entry name" value="RIBOSOMAL_S8"/>
    <property type="match status" value="1"/>
</dbReference>
<accession>B0RZS3</accession>
<evidence type="ECO:0000255" key="1">
    <source>
        <dbReference type="HAMAP-Rule" id="MF_01302"/>
    </source>
</evidence>
<evidence type="ECO:0000305" key="2"/>
<sequence length="131" mass="14162">MMTDPIADMLTRIRNAVNAKHKVVEVPASNIKKSIAQILLDEGFIDGFNVTEDGKQGIITIDLKYGPNEEKVISGIKRISKPGLRVYARANEVPKVLGGLGIAIVSTSKGLVTDKVARKEGIGGEVICYVW</sequence>
<name>RS8_FINM2</name>
<organism>
    <name type="scientific">Finegoldia magna (strain ATCC 29328 / DSM 20472 / WAL 2508)</name>
    <name type="common">Peptostreptococcus magnus</name>
    <dbReference type="NCBI Taxonomy" id="334413"/>
    <lineage>
        <taxon>Bacteria</taxon>
        <taxon>Bacillati</taxon>
        <taxon>Bacillota</taxon>
        <taxon>Tissierellia</taxon>
        <taxon>Tissierellales</taxon>
        <taxon>Peptoniphilaceae</taxon>
        <taxon>Finegoldia</taxon>
    </lineage>
</organism>
<gene>
    <name evidence="1" type="primary">rpsH</name>
    <name type="ordered locus">FMG_0169</name>
</gene>
<protein>
    <recommendedName>
        <fullName evidence="1">Small ribosomal subunit protein uS8</fullName>
    </recommendedName>
    <alternativeName>
        <fullName evidence="2">30S ribosomal protein S8</fullName>
    </alternativeName>
</protein>
<comment type="function">
    <text evidence="1">One of the primary rRNA binding proteins, it binds directly to 16S rRNA central domain where it helps coordinate assembly of the platform of the 30S subunit.</text>
</comment>
<comment type="subunit">
    <text evidence="1">Part of the 30S ribosomal subunit. Contacts proteins S5 and S12.</text>
</comment>
<comment type="similarity">
    <text evidence="1">Belongs to the universal ribosomal protein uS8 family.</text>
</comment>
<feature type="chain" id="PRO_1000140558" description="Small ribosomal subunit protein uS8">
    <location>
        <begin position="1"/>
        <end position="131"/>
    </location>
</feature>
<reference key="1">
    <citation type="journal article" date="2008" name="DNA Res.">
        <title>Complete genome sequence of Finegoldia magna, an anaerobic opportunistic pathogen.</title>
        <authorList>
            <person name="Goto T."/>
            <person name="Yamashita A."/>
            <person name="Hirakawa H."/>
            <person name="Matsutani M."/>
            <person name="Todo K."/>
            <person name="Ohshima K."/>
            <person name="Toh H."/>
            <person name="Miyamoto K."/>
            <person name="Kuhara S."/>
            <person name="Hattori M."/>
            <person name="Shimizu T."/>
            <person name="Akimoto S."/>
        </authorList>
    </citation>
    <scope>NUCLEOTIDE SEQUENCE [LARGE SCALE GENOMIC DNA]</scope>
    <source>
        <strain>ATCC 29328 / DSM 20472 / WAL 2508</strain>
    </source>
</reference>